<gene>
    <name type="primary">nup93</name>
</gene>
<reference key="1">
    <citation type="journal article" date="1996" name="Dev. Genet.">
        <title>Identification of new localized RNAs in the Xenopus oocyte by differential display PCR.</title>
        <authorList>
            <person name="Hudson J.W."/>
            <person name="Alarcon V.B."/>
            <person name="Elinson R.P."/>
        </authorList>
    </citation>
    <scope>NUCLEOTIDE SEQUENCE [MRNA]</scope>
    <scope>DEVELOPMENTAL STAGE</scope>
    <source>
        <tissue>Oocyte</tissue>
    </source>
</reference>
<reference key="2">
    <citation type="submission" date="2003-01" db="EMBL/GenBank/DDBJ databases">
        <authorList>
            <consortium name="NIH - Xenopus Gene Collection (XGC) project"/>
        </authorList>
    </citation>
    <scope>NUCLEOTIDE SEQUENCE [LARGE SCALE MRNA]</scope>
    <source>
        <tissue>Embryo</tissue>
    </source>
</reference>
<accession>Q7ZX96</accession>
<accession>P70035</accession>
<name>NUP93_XENLA</name>
<organism>
    <name type="scientific">Xenopus laevis</name>
    <name type="common">African clawed frog</name>
    <dbReference type="NCBI Taxonomy" id="8355"/>
    <lineage>
        <taxon>Eukaryota</taxon>
        <taxon>Metazoa</taxon>
        <taxon>Chordata</taxon>
        <taxon>Craniata</taxon>
        <taxon>Vertebrata</taxon>
        <taxon>Euteleostomi</taxon>
        <taxon>Amphibia</taxon>
        <taxon>Batrachia</taxon>
        <taxon>Anura</taxon>
        <taxon>Pipoidea</taxon>
        <taxon>Pipidae</taxon>
        <taxon>Xenopodinae</taxon>
        <taxon>Xenopus</taxon>
        <taxon>Xenopus</taxon>
    </lineage>
</organism>
<keyword id="KW-0002">3D-structure</keyword>
<keyword id="KW-0472">Membrane</keyword>
<keyword id="KW-0509">mRNA transport</keyword>
<keyword id="KW-0906">Nuclear pore complex</keyword>
<keyword id="KW-0539">Nucleus</keyword>
<keyword id="KW-0653">Protein transport</keyword>
<keyword id="KW-1185">Reference proteome</keyword>
<keyword id="KW-0811">Translocation</keyword>
<keyword id="KW-0813">Transport</keyword>
<dbReference type="EMBL" id="U63919">
    <property type="protein sequence ID" value="AAB49669.1"/>
    <property type="molecule type" value="mRNA"/>
</dbReference>
<dbReference type="EMBL" id="BC045089">
    <property type="protein sequence ID" value="AAH45089.1"/>
    <property type="molecule type" value="mRNA"/>
</dbReference>
<dbReference type="RefSeq" id="NP_001080591.1">
    <property type="nucleotide sequence ID" value="NM_001087122.1"/>
</dbReference>
<dbReference type="PDB" id="7FIK">
    <property type="method" value="EM"/>
    <property type="resolution" value="3.70 A"/>
    <property type="chains" value="P/S/p/s=1-820"/>
</dbReference>
<dbReference type="PDB" id="7VCI">
    <property type="method" value="EM"/>
    <property type="resolution" value="8.10 A"/>
    <property type="chains" value="U=1-820"/>
</dbReference>
<dbReference type="PDB" id="7VOP">
    <property type="method" value="EM"/>
    <property type="resolution" value="8.70 A"/>
    <property type="chains" value="U=1-820"/>
</dbReference>
<dbReference type="PDB" id="7WB4">
    <property type="method" value="EM"/>
    <property type="resolution" value="5.60 A"/>
    <property type="chains" value="L/O=1-820"/>
</dbReference>
<dbReference type="PDB" id="7WKK">
    <property type="method" value="EM"/>
    <property type="resolution" value="4.20 A"/>
    <property type="chains" value="C/E/c/e=1-820"/>
</dbReference>
<dbReference type="PDB" id="7ZOX">
    <property type="method" value="EM"/>
    <property type="resolution" value="4.40 A"/>
    <property type="chains" value="A=168-820"/>
</dbReference>
<dbReference type="PDBsum" id="7FIK"/>
<dbReference type="PDBsum" id="7VCI"/>
<dbReference type="PDBsum" id="7VOP"/>
<dbReference type="PDBsum" id="7WB4"/>
<dbReference type="PDBsum" id="7WKK"/>
<dbReference type="PDBsum" id="7ZOX"/>
<dbReference type="EMDB" id="EMD-14849"/>
<dbReference type="EMDB" id="EMD-31600"/>
<dbReference type="EMDB" id="EMD-31891"/>
<dbReference type="EMDB" id="EMD-32056"/>
<dbReference type="EMDB" id="EMD-32394"/>
<dbReference type="EMDB" id="EMD-32566"/>
<dbReference type="SMR" id="Q7ZX96"/>
<dbReference type="BioGRID" id="98525">
    <property type="interactions" value="2"/>
</dbReference>
<dbReference type="DIP" id="DIP-61693N"/>
<dbReference type="IntAct" id="Q7ZX96">
    <property type="interactions" value="5"/>
</dbReference>
<dbReference type="MINT" id="Q7ZX96"/>
<dbReference type="GeneID" id="380283"/>
<dbReference type="KEGG" id="xla:380283"/>
<dbReference type="AGR" id="Xenbase:XB-GENE-5823157"/>
<dbReference type="CTD" id="380283"/>
<dbReference type="Xenbase" id="XB-GENE-5823157">
    <property type="gene designation" value="nup93.L"/>
</dbReference>
<dbReference type="OMA" id="LLMCGQF"/>
<dbReference type="OrthoDB" id="1918363at2759"/>
<dbReference type="Proteomes" id="UP000186698">
    <property type="component" value="Chromosome 4L"/>
</dbReference>
<dbReference type="Bgee" id="380283">
    <property type="expression patterns" value="Expressed in testis and 19 other cell types or tissues"/>
</dbReference>
<dbReference type="GO" id="GO:0005829">
    <property type="term" value="C:cytosol"/>
    <property type="evidence" value="ECO:0000304"/>
    <property type="project" value="Reactome"/>
</dbReference>
<dbReference type="GO" id="GO:0031965">
    <property type="term" value="C:nuclear membrane"/>
    <property type="evidence" value="ECO:0000250"/>
    <property type="project" value="UniProtKB"/>
</dbReference>
<dbReference type="GO" id="GO:0034399">
    <property type="term" value="C:nuclear periphery"/>
    <property type="evidence" value="ECO:0000250"/>
    <property type="project" value="UniProtKB"/>
</dbReference>
<dbReference type="GO" id="GO:0005643">
    <property type="term" value="C:nuclear pore"/>
    <property type="evidence" value="ECO:0000250"/>
    <property type="project" value="UniProtKB"/>
</dbReference>
<dbReference type="GO" id="GO:0017056">
    <property type="term" value="F:structural constituent of nuclear pore"/>
    <property type="evidence" value="ECO:0000250"/>
    <property type="project" value="UniProtKB"/>
</dbReference>
<dbReference type="GO" id="GO:0051292">
    <property type="term" value="P:nuclear pore complex assembly"/>
    <property type="evidence" value="ECO:0000250"/>
    <property type="project" value="UniProtKB"/>
</dbReference>
<dbReference type="GO" id="GO:0016973">
    <property type="term" value="P:poly(A)+ mRNA export from nucleus"/>
    <property type="evidence" value="ECO:0000318"/>
    <property type="project" value="GO_Central"/>
</dbReference>
<dbReference type="GO" id="GO:0006606">
    <property type="term" value="P:protein import into nucleus"/>
    <property type="evidence" value="ECO:0000318"/>
    <property type="project" value="GO_Central"/>
</dbReference>
<dbReference type="InterPro" id="IPR007231">
    <property type="entry name" value="Nucleoporin_int_Nup93/Nic96"/>
</dbReference>
<dbReference type="PANTHER" id="PTHR11225:SF4">
    <property type="entry name" value="NUCLEAR PORE COMPLEX PROTEIN NUP93"/>
    <property type="match status" value="1"/>
</dbReference>
<dbReference type="PANTHER" id="PTHR11225">
    <property type="entry name" value="NUCLEAR PORE COMPLEX PROTEIN NUP93 NUCLEOPORIN NUP93 DEAD EYE PROTEIN"/>
    <property type="match status" value="1"/>
</dbReference>
<dbReference type="Pfam" id="PF04097">
    <property type="entry name" value="Nic96"/>
    <property type="match status" value="1"/>
</dbReference>
<comment type="function">
    <text evidence="1">Plays a role in the nuclear pore complex (NPC) assembly and/or maintenance.</text>
</comment>
<comment type="subcellular location">
    <subcellularLocation>
        <location evidence="1">Nucleus membrane</location>
        <topology evidence="1">Peripheral membrane protein</topology>
    </subcellularLocation>
    <subcellularLocation>
        <location evidence="1">Nucleus</location>
        <location evidence="1">Nuclear pore complex</location>
    </subcellularLocation>
    <text evidence="1">Localizes at the nuclear basket and at or near the nuclear entry to the gated channel of the pore.</text>
</comment>
<comment type="developmental stage">
    <text evidence="2">Expressed throughout early development, with embryonic expression primarily in anterior neural tissues.</text>
</comment>
<comment type="similarity">
    <text evidence="3">Belongs to the nucleoporin interacting component (NIC) family.</text>
</comment>
<sequence>MDGEGFGELLQQAEQLAAETEGVTELPHVERNLQEIQQAGERLRSKTMTRTSQESANVKASVLLGSRGLDISHISQRLESLSAATTFEPLEPVKDTDIQGFLKNEKDNALLSAIEESRKRTFVMAEEYHRESMLVEWEQVKQRVLHTLLASGEDALDFTQESETSYISESGAPGRSSLDNVEMAYARQMYMYNEKVVSGHLQPSLVDLCTEAAERLDDKNVSDLWVMVKQMTDVPLIPASDTLKSRCSGQMQMAFVRQALNYLEQSYKNYTLISVFANLQQAQLGGVPGTYNLVRSFLNIRLPTPIPGLQDGEIEGYPVWALIYYCMRCGDLMAAQQVVNRAQHQLGDFKNCFQEYIHNKDRRLSPTTENKLRLHYRRAVRASTDPYKRAVYCIIGRCDVSDNHSEVADKTEDYLWLKLSQVCFEDEANSSPQDRLTLPQFQKQLFEDYGESHFAVNQQPYLYFQVLFLTAQFEAAIAFLFRLERTRCHAVHVALALFELKLLLKSTGQSAQLLSQEPGEPQGVRRLNFIRLLMLYTRKFEPTDPREALQYFYFLRNEKDNQGESMFLRCVSELVIESREFDMLLGKLEKDGSRKPGAIDKFTRDTKTIINKVASVAENKGLFEEAAKLYDLAKNPDKVLELTNKLLSPVVSQISAPQSNRERLKNMALAIAERYKSQGVSAEKSINSTFYLLLDLITFFDEYHAGHIDLSFDVIERLKLVPLSQDSVEERVAAFRNFSDEIRHNLSEILLATMNILFTQYKRLKGSGPTTLGRPQRVQEDKDSVLRSQARALITFAGMIPYRMSGDTNARLVQMEVLMN</sequence>
<evidence type="ECO:0000250" key="1"/>
<evidence type="ECO:0000269" key="2">
    <source>
    </source>
</evidence>
<evidence type="ECO:0000305" key="3"/>
<proteinExistence type="evidence at protein level"/>
<protein>
    <recommendedName>
        <fullName>Nuclear pore complex protein Nup93</fullName>
    </recommendedName>
    <alternativeName>
        <fullName>93 kDa nucleoporin</fullName>
    </alternativeName>
    <alternativeName>
        <fullName>An4a</fullName>
    </alternativeName>
    <alternativeName>
        <fullName>Nucleoporin Nup93</fullName>
    </alternativeName>
</protein>
<feature type="chain" id="PRO_0000124784" description="Nuclear pore complex protein Nup93">
    <location>
        <begin position="1"/>
        <end position="820"/>
    </location>
</feature>
<feature type="sequence conflict" description="In Ref. 1; AAB49669." evidence="3" ref="1">
    <original>E</original>
    <variation>C</variation>
    <location>
        <position position="41"/>
    </location>
</feature>
<feature type="sequence conflict" description="In Ref. 1; AAB49669." evidence="3" ref="1">
    <original>VLL</original>
    <variation>CTA</variation>
    <location>
        <begin position="62"/>
        <end position="64"/>
    </location>
</feature>
<feature type="sequence conflict" description="In Ref. 1; AAB49669." evidence="3" ref="1">
    <original>L</original>
    <variation>H</variation>
    <location>
        <position position="102"/>
    </location>
</feature>
<feature type="sequence conflict" description="In Ref. 1; AAB49669." evidence="3" ref="1">
    <original>PI</original>
    <variation>TV</variation>
    <location>
        <begin position="305"/>
        <end position="306"/>
    </location>
</feature>
<feature type="sequence conflict" description="In Ref. 1; AAB49669." evidence="3" ref="1">
    <original>H</original>
    <variation>N</variation>
    <location>
        <position position="404"/>
    </location>
</feature>
<feature type="sequence conflict" description="In Ref. 1; AAB49669." evidence="3" ref="1">
    <original>Q</original>
    <variation>E</variation>
    <location>
        <position position="433"/>
    </location>
</feature>